<comment type="function">
    <text evidence="4 5">Acts as a GTPase activating protein for RAB7A. Does not act on RAB4, RAB5 or RAB6.</text>
</comment>
<comment type="subunit">
    <text evidence="1">Interacts with non-phosphorylated form of RAB8A; phosphorylation of RAB8A at 'Thr-72' disrupts this interaction (By similarity). Interacts with ARMC12 (By similarity).</text>
</comment>
<comment type="subcellular location">
    <subcellularLocation>
        <location evidence="4">Cytoplasm</location>
    </subcellularLocation>
</comment>
<comment type="tissue specificity">
    <text evidence="4 6">Ubiquitous, with highest expression in heart, liver and testis and lower expression in brain, spleen, lung, kidney and skeletal muscle.</text>
</comment>
<comment type="caution">
    <text evidence="7">PubMed:16055087 showns that TBC1D15 can also functions as GTPase activating for RAB11 at a lower extent than for RAB7A, however this function is not confirmed by PubMed:20363736.</text>
</comment>
<feature type="initiator methionine" description="Removed" evidence="1">
    <location>
        <position position="1"/>
    </location>
</feature>
<feature type="chain" id="PRO_0000208043" description="TBC1 domain family member 15">
    <location>
        <begin position="2"/>
        <end position="671"/>
    </location>
</feature>
<feature type="domain" description="Rab-GAP TBC" evidence="2">
    <location>
        <begin position="329"/>
        <end position="539"/>
    </location>
</feature>
<feature type="region of interest" description="Disordered" evidence="3">
    <location>
        <begin position="650"/>
        <end position="671"/>
    </location>
</feature>
<feature type="modified residue" description="N-acetylalanine" evidence="1">
    <location>
        <position position="2"/>
    </location>
</feature>
<feature type="modified residue" description="Phosphoserine" evidence="1">
    <location>
        <position position="23"/>
    </location>
</feature>
<feature type="modified residue" description="Phosphoserine" evidence="8">
    <location>
        <position position="32"/>
    </location>
</feature>
<feature type="modified residue" description="Phosphoserine" evidence="1">
    <location>
        <position position="70"/>
    </location>
</feature>
<feature type="modified residue" description="Phosphoserine" evidence="8">
    <location>
        <position position="205"/>
    </location>
</feature>
<feature type="modified residue" description="Phosphoserine" evidence="1">
    <location>
        <position position="257"/>
    </location>
</feature>
<feature type="modified residue" description="Phosphoserine" evidence="1">
    <location>
        <position position="623"/>
    </location>
</feature>
<feature type="modified residue" description="Phosphoserine" evidence="1">
    <location>
        <position position="655"/>
    </location>
</feature>
<feature type="modified residue" description="Phosphothreonine" evidence="1">
    <location>
        <position position="669"/>
    </location>
</feature>
<sequence length="671" mass="76527">MAAAGVVSGKIIYEQEGVYIHSSCGKANDQDSLISGILRVLEKDAEVIVDWRPLDDALDSSSILCAGKDSSSVVEWTQAPKERAHRGSDQQSSYEAEWDMVTTVSFKKKPHTNGDAPGHRNGKSKWSFLFSLADLKSVKQSKEGMGWSYLVFCLKDDVMLPALHFHQGDSKLLIESLEKYVVLCESPQDSRTLLVNCQNKSLSQSFENLLDEPAYGLIQKIKKDPYTATMVGFSKVTNYIFDSLRGSDPSTHQRPPSEMADFLSDAIPGLKINQQEEPGFEVITRIDLGERPVVQRREPVSLEEWNKSLDPEGRLVAVESMKQKIFRGGLSHSLRKQAWKFLLGYFPWDSTKEERTQLQKQKTDEYFRMKLQWKSVSEAQEKRNSRLRDYRSLIEKDVNRTDRTNKFYEGQDNPGLILLHDILMTYCMYDFDLGYVQGMSDLLSPLLYVMENEVDAFWCFASYMDQMHQNFEEQMQGMKTQLIQLSTLLRLLDSGFCSYLESQDSGYLYFCFRWLLIRFKREFSFLDILRLWEVMWTELPCKNFHLLLCCAILESEKQQIMAKHYGFNEILKHINELSMKIDVEDILCKAEAISLQMAQCKELPQAVCEILGLQDSEITTPDSDTDENVGSPCPVSAFPSSTLPILAASEAKDDSPTQTLASPNACRLTPA</sequence>
<protein>
    <recommendedName>
        <fullName>TBC1 domain family member 15</fullName>
    </recommendedName>
    <alternativeName>
        <fullName>GTPase-activating protein RAB7</fullName>
        <shortName>GAP for RAB7</shortName>
        <shortName>Rab7-GAP</shortName>
    </alternativeName>
</protein>
<evidence type="ECO:0000250" key="1">
    <source>
        <dbReference type="UniProtKB" id="Q8TC07"/>
    </source>
</evidence>
<evidence type="ECO:0000255" key="2">
    <source>
        <dbReference type="PROSITE-ProRule" id="PRU00163"/>
    </source>
</evidence>
<evidence type="ECO:0000256" key="3">
    <source>
        <dbReference type="SAM" id="MobiDB-lite"/>
    </source>
</evidence>
<evidence type="ECO:0000269" key="4">
    <source>
    </source>
</evidence>
<evidence type="ECO:0000269" key="5">
    <source>
    </source>
</evidence>
<evidence type="ECO:0000269" key="6">
    <source>
    </source>
</evidence>
<evidence type="ECO:0000305" key="7"/>
<evidence type="ECO:0007744" key="8">
    <source>
    </source>
</evidence>
<organism>
    <name type="scientific">Mus musculus</name>
    <name type="common">Mouse</name>
    <dbReference type="NCBI Taxonomy" id="10090"/>
    <lineage>
        <taxon>Eukaryota</taxon>
        <taxon>Metazoa</taxon>
        <taxon>Chordata</taxon>
        <taxon>Craniata</taxon>
        <taxon>Vertebrata</taxon>
        <taxon>Euteleostomi</taxon>
        <taxon>Mammalia</taxon>
        <taxon>Eutheria</taxon>
        <taxon>Euarchontoglires</taxon>
        <taxon>Glires</taxon>
        <taxon>Rodentia</taxon>
        <taxon>Myomorpha</taxon>
        <taxon>Muroidea</taxon>
        <taxon>Muridae</taxon>
        <taxon>Murinae</taxon>
        <taxon>Mus</taxon>
        <taxon>Mus</taxon>
    </lineage>
</organism>
<name>TBC15_MOUSE</name>
<keyword id="KW-0007">Acetylation</keyword>
<keyword id="KW-0963">Cytoplasm</keyword>
<keyword id="KW-0343">GTPase activation</keyword>
<keyword id="KW-0597">Phosphoprotein</keyword>
<keyword id="KW-1185">Reference proteome</keyword>
<accession>Q9CXF4</accession>
<accession>Q3UI41</accession>
<dbReference type="EMBL" id="AK014477">
    <property type="protein sequence ID" value="BAB29380.1"/>
    <property type="molecule type" value="mRNA"/>
</dbReference>
<dbReference type="EMBL" id="AK078875">
    <property type="protein sequence ID" value="BAC37435.1"/>
    <property type="molecule type" value="mRNA"/>
</dbReference>
<dbReference type="EMBL" id="AK147085">
    <property type="protein sequence ID" value="BAE27665.1"/>
    <property type="molecule type" value="mRNA"/>
</dbReference>
<dbReference type="CCDS" id="CCDS24176.1"/>
<dbReference type="RefSeq" id="NP_079982.3">
    <property type="nucleotide sequence ID" value="NM_025706.3"/>
</dbReference>
<dbReference type="SMR" id="Q9CXF4"/>
<dbReference type="BioGRID" id="211646">
    <property type="interactions" value="3"/>
</dbReference>
<dbReference type="FunCoup" id="Q9CXF4">
    <property type="interactions" value="4269"/>
</dbReference>
<dbReference type="IntAct" id="Q9CXF4">
    <property type="interactions" value="2"/>
</dbReference>
<dbReference type="STRING" id="10090.ENSMUSP00000020339"/>
<dbReference type="GlyGen" id="Q9CXF4">
    <property type="glycosylation" value="2 sites, 1 N-linked glycan (1 site), 1 O-linked glycan (1 site)"/>
</dbReference>
<dbReference type="iPTMnet" id="Q9CXF4"/>
<dbReference type="PhosphoSitePlus" id="Q9CXF4"/>
<dbReference type="SwissPalm" id="Q9CXF4"/>
<dbReference type="jPOST" id="Q9CXF4"/>
<dbReference type="PaxDb" id="10090-ENSMUSP00000020339"/>
<dbReference type="ProteomicsDB" id="254650"/>
<dbReference type="Pumba" id="Q9CXF4"/>
<dbReference type="Antibodypedia" id="2850">
    <property type="antibodies" value="87 antibodies from 16 providers"/>
</dbReference>
<dbReference type="Ensembl" id="ENSMUST00000020339.10">
    <property type="protein sequence ID" value="ENSMUSP00000020339.9"/>
    <property type="gene ID" value="ENSMUSG00000020130.10"/>
</dbReference>
<dbReference type="GeneID" id="66687"/>
<dbReference type="KEGG" id="mmu:66687"/>
<dbReference type="UCSC" id="uc007hax.2">
    <property type="organism name" value="mouse"/>
</dbReference>
<dbReference type="AGR" id="MGI:1913937"/>
<dbReference type="CTD" id="64786"/>
<dbReference type="MGI" id="MGI:1913937">
    <property type="gene designation" value="Tbc1d15"/>
</dbReference>
<dbReference type="VEuPathDB" id="HostDB:ENSMUSG00000020130"/>
<dbReference type="eggNOG" id="KOG2197">
    <property type="taxonomic scope" value="Eukaryota"/>
</dbReference>
<dbReference type="GeneTree" id="ENSGT00940000156429"/>
<dbReference type="HOGENOM" id="CLU_004457_2_2_1"/>
<dbReference type="InParanoid" id="Q9CXF4"/>
<dbReference type="OMA" id="YEGLNNP"/>
<dbReference type="OrthoDB" id="10264062at2759"/>
<dbReference type="PhylomeDB" id="Q9CXF4"/>
<dbReference type="TreeFam" id="TF314296"/>
<dbReference type="Reactome" id="R-MMU-8854214">
    <property type="pathway name" value="TBC/RABGAPs"/>
</dbReference>
<dbReference type="BioGRID-ORCS" id="66687">
    <property type="hits" value="5 hits in 78 CRISPR screens"/>
</dbReference>
<dbReference type="ChiTaRS" id="Tbc1d15">
    <property type="organism name" value="mouse"/>
</dbReference>
<dbReference type="PRO" id="PR:Q9CXF4"/>
<dbReference type="Proteomes" id="UP000000589">
    <property type="component" value="Chromosome 10"/>
</dbReference>
<dbReference type="RNAct" id="Q9CXF4">
    <property type="molecule type" value="protein"/>
</dbReference>
<dbReference type="Bgee" id="ENSMUSG00000020130">
    <property type="expression patterns" value="Expressed in secondary oocyte and 261 other cell types or tissues"/>
</dbReference>
<dbReference type="GO" id="GO:0005737">
    <property type="term" value="C:cytoplasm"/>
    <property type="evidence" value="ECO:0000314"/>
    <property type="project" value="UniProtKB"/>
</dbReference>
<dbReference type="GO" id="GO:0005576">
    <property type="term" value="C:extracellular region"/>
    <property type="evidence" value="ECO:0000314"/>
    <property type="project" value="MGI"/>
</dbReference>
<dbReference type="GO" id="GO:0005739">
    <property type="term" value="C:mitochondrion"/>
    <property type="evidence" value="ECO:0007005"/>
    <property type="project" value="MGI"/>
</dbReference>
<dbReference type="GO" id="GO:0005096">
    <property type="term" value="F:GTPase activator activity"/>
    <property type="evidence" value="ECO:0000314"/>
    <property type="project" value="UniProtKB"/>
</dbReference>
<dbReference type="GO" id="GO:0043087">
    <property type="term" value="P:regulation of GTPase activity"/>
    <property type="evidence" value="ECO:0000314"/>
    <property type="project" value="UniProtKB"/>
</dbReference>
<dbReference type="FunFam" id="1.10.472.80:FF:000005">
    <property type="entry name" value="TBC1 domain family member 15"/>
    <property type="match status" value="1"/>
</dbReference>
<dbReference type="FunFam" id="1.10.8.270:FF:000005">
    <property type="entry name" value="TBC1 domain family member 15"/>
    <property type="match status" value="1"/>
</dbReference>
<dbReference type="Gene3D" id="1.10.8.270">
    <property type="entry name" value="putative rabgap domain of human tbc1 domain family member 14 like domains"/>
    <property type="match status" value="1"/>
</dbReference>
<dbReference type="Gene3D" id="1.10.472.80">
    <property type="entry name" value="Ypt/Rab-GAP domain of gyp1p, domain 3"/>
    <property type="match status" value="1"/>
</dbReference>
<dbReference type="InterPro" id="IPR000195">
    <property type="entry name" value="Rab-GAP-TBC_dom"/>
</dbReference>
<dbReference type="InterPro" id="IPR035969">
    <property type="entry name" value="Rab-GAP_TBC_sf"/>
</dbReference>
<dbReference type="InterPro" id="IPR021935">
    <property type="entry name" value="SGSM1/2_RBD"/>
</dbReference>
<dbReference type="PANTHER" id="PTHR22957:SF300">
    <property type="entry name" value="TBC1 DOMAIN FAMILY MEMBER 15"/>
    <property type="match status" value="1"/>
</dbReference>
<dbReference type="PANTHER" id="PTHR22957">
    <property type="entry name" value="TBC1 DOMAIN FAMILY MEMBER GTPASE-ACTIVATING PROTEIN"/>
    <property type="match status" value="1"/>
</dbReference>
<dbReference type="Pfam" id="PF12068">
    <property type="entry name" value="PH_RBD"/>
    <property type="match status" value="1"/>
</dbReference>
<dbReference type="Pfam" id="PF00566">
    <property type="entry name" value="RabGAP-TBC"/>
    <property type="match status" value="1"/>
</dbReference>
<dbReference type="SMART" id="SM00164">
    <property type="entry name" value="TBC"/>
    <property type="match status" value="1"/>
</dbReference>
<dbReference type="SUPFAM" id="SSF47923">
    <property type="entry name" value="Ypt/Rab-GAP domain of gyp1p"/>
    <property type="match status" value="2"/>
</dbReference>
<dbReference type="PROSITE" id="PS50086">
    <property type="entry name" value="TBC_RABGAP"/>
    <property type="match status" value="1"/>
</dbReference>
<gene>
    <name type="primary">Tbc1d15</name>
</gene>
<proteinExistence type="evidence at protein level"/>
<reference key="1">
    <citation type="journal article" date="2005" name="Science">
        <title>The transcriptional landscape of the mammalian genome.</title>
        <authorList>
            <person name="Carninci P."/>
            <person name="Kasukawa T."/>
            <person name="Katayama S."/>
            <person name="Gough J."/>
            <person name="Frith M.C."/>
            <person name="Maeda N."/>
            <person name="Oyama R."/>
            <person name="Ravasi T."/>
            <person name="Lenhard B."/>
            <person name="Wells C."/>
            <person name="Kodzius R."/>
            <person name="Shimokawa K."/>
            <person name="Bajic V.B."/>
            <person name="Brenner S.E."/>
            <person name="Batalov S."/>
            <person name="Forrest A.R."/>
            <person name="Zavolan M."/>
            <person name="Davis M.J."/>
            <person name="Wilming L.G."/>
            <person name="Aidinis V."/>
            <person name="Allen J.E."/>
            <person name="Ambesi-Impiombato A."/>
            <person name="Apweiler R."/>
            <person name="Aturaliya R.N."/>
            <person name="Bailey T.L."/>
            <person name="Bansal M."/>
            <person name="Baxter L."/>
            <person name="Beisel K.W."/>
            <person name="Bersano T."/>
            <person name="Bono H."/>
            <person name="Chalk A.M."/>
            <person name="Chiu K.P."/>
            <person name="Choudhary V."/>
            <person name="Christoffels A."/>
            <person name="Clutterbuck D.R."/>
            <person name="Crowe M.L."/>
            <person name="Dalla E."/>
            <person name="Dalrymple B.P."/>
            <person name="de Bono B."/>
            <person name="Della Gatta G."/>
            <person name="di Bernardo D."/>
            <person name="Down T."/>
            <person name="Engstrom P."/>
            <person name="Fagiolini M."/>
            <person name="Faulkner G."/>
            <person name="Fletcher C.F."/>
            <person name="Fukushima T."/>
            <person name="Furuno M."/>
            <person name="Futaki S."/>
            <person name="Gariboldi M."/>
            <person name="Georgii-Hemming P."/>
            <person name="Gingeras T.R."/>
            <person name="Gojobori T."/>
            <person name="Green R.E."/>
            <person name="Gustincich S."/>
            <person name="Harbers M."/>
            <person name="Hayashi Y."/>
            <person name="Hensch T.K."/>
            <person name="Hirokawa N."/>
            <person name="Hill D."/>
            <person name="Huminiecki L."/>
            <person name="Iacono M."/>
            <person name="Ikeo K."/>
            <person name="Iwama A."/>
            <person name="Ishikawa T."/>
            <person name="Jakt M."/>
            <person name="Kanapin A."/>
            <person name="Katoh M."/>
            <person name="Kawasawa Y."/>
            <person name="Kelso J."/>
            <person name="Kitamura H."/>
            <person name="Kitano H."/>
            <person name="Kollias G."/>
            <person name="Krishnan S.P."/>
            <person name="Kruger A."/>
            <person name="Kummerfeld S.K."/>
            <person name="Kurochkin I.V."/>
            <person name="Lareau L.F."/>
            <person name="Lazarevic D."/>
            <person name="Lipovich L."/>
            <person name="Liu J."/>
            <person name="Liuni S."/>
            <person name="McWilliam S."/>
            <person name="Madan Babu M."/>
            <person name="Madera M."/>
            <person name="Marchionni L."/>
            <person name="Matsuda H."/>
            <person name="Matsuzawa S."/>
            <person name="Miki H."/>
            <person name="Mignone F."/>
            <person name="Miyake S."/>
            <person name="Morris K."/>
            <person name="Mottagui-Tabar S."/>
            <person name="Mulder N."/>
            <person name="Nakano N."/>
            <person name="Nakauchi H."/>
            <person name="Ng P."/>
            <person name="Nilsson R."/>
            <person name="Nishiguchi S."/>
            <person name="Nishikawa S."/>
            <person name="Nori F."/>
            <person name="Ohara O."/>
            <person name="Okazaki Y."/>
            <person name="Orlando V."/>
            <person name="Pang K.C."/>
            <person name="Pavan W.J."/>
            <person name="Pavesi G."/>
            <person name="Pesole G."/>
            <person name="Petrovsky N."/>
            <person name="Piazza S."/>
            <person name="Reed J."/>
            <person name="Reid J.F."/>
            <person name="Ring B.Z."/>
            <person name="Ringwald M."/>
            <person name="Rost B."/>
            <person name="Ruan Y."/>
            <person name="Salzberg S.L."/>
            <person name="Sandelin A."/>
            <person name="Schneider C."/>
            <person name="Schoenbach C."/>
            <person name="Sekiguchi K."/>
            <person name="Semple C.A."/>
            <person name="Seno S."/>
            <person name="Sessa L."/>
            <person name="Sheng Y."/>
            <person name="Shibata Y."/>
            <person name="Shimada H."/>
            <person name="Shimada K."/>
            <person name="Silva D."/>
            <person name="Sinclair B."/>
            <person name="Sperling S."/>
            <person name="Stupka E."/>
            <person name="Sugiura K."/>
            <person name="Sultana R."/>
            <person name="Takenaka Y."/>
            <person name="Taki K."/>
            <person name="Tammoja K."/>
            <person name="Tan S.L."/>
            <person name="Tang S."/>
            <person name="Taylor M.S."/>
            <person name="Tegner J."/>
            <person name="Teichmann S.A."/>
            <person name="Ueda H.R."/>
            <person name="van Nimwegen E."/>
            <person name="Verardo R."/>
            <person name="Wei C.L."/>
            <person name="Yagi K."/>
            <person name="Yamanishi H."/>
            <person name="Zabarovsky E."/>
            <person name="Zhu S."/>
            <person name="Zimmer A."/>
            <person name="Hide W."/>
            <person name="Bult C."/>
            <person name="Grimmond S.M."/>
            <person name="Teasdale R.D."/>
            <person name="Liu E.T."/>
            <person name="Brusic V."/>
            <person name="Quackenbush J."/>
            <person name="Wahlestedt C."/>
            <person name="Mattick J.S."/>
            <person name="Hume D.A."/>
            <person name="Kai C."/>
            <person name="Sasaki D."/>
            <person name="Tomaru Y."/>
            <person name="Fukuda S."/>
            <person name="Kanamori-Katayama M."/>
            <person name="Suzuki M."/>
            <person name="Aoki J."/>
            <person name="Arakawa T."/>
            <person name="Iida J."/>
            <person name="Imamura K."/>
            <person name="Itoh M."/>
            <person name="Kato T."/>
            <person name="Kawaji H."/>
            <person name="Kawagashira N."/>
            <person name="Kawashima T."/>
            <person name="Kojima M."/>
            <person name="Kondo S."/>
            <person name="Konno H."/>
            <person name="Nakano K."/>
            <person name="Ninomiya N."/>
            <person name="Nishio T."/>
            <person name="Okada M."/>
            <person name="Plessy C."/>
            <person name="Shibata K."/>
            <person name="Shiraki T."/>
            <person name="Suzuki S."/>
            <person name="Tagami M."/>
            <person name="Waki K."/>
            <person name="Watahiki A."/>
            <person name="Okamura-Oho Y."/>
            <person name="Suzuki H."/>
            <person name="Kawai J."/>
            <person name="Hayashizaki Y."/>
        </authorList>
    </citation>
    <scope>NUCLEOTIDE SEQUENCE [LARGE SCALE MRNA]</scope>
    <source>
        <strain>C57BL/6J</strain>
        <tissue>Colon</tissue>
        <tissue>Kidney</tissue>
        <tissue>Liver</tissue>
    </source>
</reference>
<reference key="2">
    <citation type="journal article" date="2004" name="Mol. Cell. Proteomics">
        <title>Phosphoproteomic analysis of the developing mouse brain.</title>
        <authorList>
            <person name="Ballif B.A."/>
            <person name="Villen J."/>
            <person name="Beausoleil S.A."/>
            <person name="Schwartz D."/>
            <person name="Gygi S.P."/>
        </authorList>
    </citation>
    <scope>IDENTIFICATION BY MASS SPECTROMETRY [LARGE SCALE ANALYSIS]</scope>
    <source>
        <tissue>Embryonic brain</tissue>
    </source>
</reference>
<reference key="3">
    <citation type="journal article" date="2005" name="Biochem. Biophys. Res. Commun.">
        <title>TBC domain family, member 15 is a novel mammalian Rab GTPase-activating protein with substrate preference for Rab7.</title>
        <authorList>
            <person name="Zhang X.M."/>
            <person name="Walsh B."/>
            <person name="Mitchell C.A."/>
            <person name="Rowe T."/>
        </authorList>
    </citation>
    <scope>TISSUE SPECIFICITY</scope>
    <scope>SUBCELLULAR LOCATION</scope>
    <scope>FUNCTION</scope>
</reference>
<reference key="4">
    <citation type="journal article" date="2009" name="Mol. Cell. Proteomics">
        <title>Large scale localization of protein phosphorylation by use of electron capture dissociation mass spectrometry.</title>
        <authorList>
            <person name="Sweet S.M."/>
            <person name="Bailey C.M."/>
            <person name="Cunningham D.L."/>
            <person name="Heath J.K."/>
            <person name="Cooper H.J."/>
        </authorList>
    </citation>
    <scope>IDENTIFICATION BY MASS SPECTROMETRY [LARGE SCALE ANALYSIS]</scope>
    <source>
        <tissue>Embryonic fibroblast</tissue>
    </source>
</reference>
<reference key="5">
    <citation type="journal article" date="2010" name="Cell">
        <title>A tissue-specific atlas of mouse protein phosphorylation and expression.</title>
        <authorList>
            <person name="Huttlin E.L."/>
            <person name="Jedrychowski M.P."/>
            <person name="Elias J.E."/>
            <person name="Goswami T."/>
            <person name="Rad R."/>
            <person name="Beausoleil S.A."/>
            <person name="Villen J."/>
            <person name="Haas W."/>
            <person name="Sowa M.E."/>
            <person name="Gygi S.P."/>
        </authorList>
    </citation>
    <scope>PHOSPHORYLATION [LARGE SCALE ANALYSIS] AT SER-32 AND SER-205</scope>
    <scope>IDENTIFICATION BY MASS SPECTROMETRY [LARGE SCALE ANALYSIS]</scope>
    <source>
        <tissue>Brain</tissue>
        <tissue>Brown adipose tissue</tissue>
        <tissue>Heart</tissue>
        <tissue>Kidney</tissue>
        <tissue>Liver</tissue>
        <tissue>Lung</tissue>
        <tissue>Pancreas</tissue>
        <tissue>Spleen</tissue>
        <tissue>Testis</tissue>
    </source>
</reference>
<reference key="6">
    <citation type="journal article" date="2010" name="J. Biol. Chem.">
        <title>Differential effects of TBC1D15 and mammalian Vps39 on Rab7 activation state, lysosomal morphology, and growth factor dependence.</title>
        <authorList>
            <person name="Peralta E.R."/>
            <person name="Martin B.C."/>
            <person name="Edinger A.L."/>
        </authorList>
    </citation>
    <scope>FUNCTION</scope>
</reference>
<reference key="7">
    <citation type="journal article" date="2021" name="Proc. Natl. Acad. Sci. U.S.A.">
        <title>ARMC12 regulates spatiotemporal mitochondrial dynamics during spermiogenesis and is required for male fertility.</title>
        <authorList>
            <person name="Shimada K."/>
            <person name="Park S."/>
            <person name="Miyata H."/>
            <person name="Yu Z."/>
            <person name="Morohoshi A."/>
            <person name="Oura S."/>
            <person name="Matzuk M.M."/>
            <person name="Ikawa M."/>
        </authorList>
    </citation>
    <scope>TISSUE SPECIFICITY</scope>
</reference>